<protein>
    <recommendedName>
        <fullName evidence="1">Adaptive-response sensory kinase SasA</fullName>
        <ecNumber evidence="1">2.7.13.3</ecNumber>
    </recommendedName>
    <alternativeName>
        <fullName evidence="1">Sensor histidine kinase SasA</fullName>
    </alternativeName>
</protein>
<proteinExistence type="inferred from homology"/>
<reference key="1">
    <citation type="submission" date="2005-08" db="EMBL/GenBank/DDBJ databases">
        <title>Complete sequence of Synechococcus sp. CC9902.</title>
        <authorList>
            <person name="Copeland A."/>
            <person name="Lucas S."/>
            <person name="Lapidus A."/>
            <person name="Barry K."/>
            <person name="Detter J.C."/>
            <person name="Glavina T."/>
            <person name="Hammon N."/>
            <person name="Israni S."/>
            <person name="Pitluck S."/>
            <person name="Martinez M."/>
            <person name="Schmutz J."/>
            <person name="Larimer F."/>
            <person name="Land M."/>
            <person name="Kyrpides N."/>
            <person name="Ivanova N."/>
            <person name="Richardson P."/>
        </authorList>
    </citation>
    <scope>NUCLEOTIDE SEQUENCE [LARGE SCALE GENOMIC DNA]</scope>
    <source>
        <strain>CC9902</strain>
    </source>
</reference>
<accession>Q3AYV8</accession>
<comment type="function">
    <text evidence="1">Member of the two-component regulatory system SasA/RpaA involved in genome-wide circadian gene expression. One of several clock output pathways. Participates in the Kai clock protein complex, the main circadian regulator in cyanobacteria, via its interaction with KaiC. KaiC enhances the autophosphorylation activity of SasA, which then transfers its phosphate group to RpaA to activate it. In addition to its output function, recruits fold-shifted KaiB (KaiB(fs)) to KaiC to cooperatively form the KaiB(6):KaiC(6) complex (independent of SasA kinase activity). Required for robustness of the circadian rhythm of gene expression and is involved in clock output, also required for adaptation to light/dark cycles.</text>
</comment>
<comment type="catalytic activity">
    <reaction evidence="1">
        <text>ATP + protein L-histidine = ADP + protein N-phospho-L-histidine.</text>
        <dbReference type="EC" id="2.7.13.3"/>
    </reaction>
</comment>
<comment type="subunit">
    <text evidence="1">Homooligomerizes. Interacts with KaiC. Participates in the KaiABC clock complex, whose core is composed of a KaiC homohexamer, 6 KaiB and up to 6 KaiA dimers. SasA and KaiB(fs) compete to bind to KaiC.</text>
</comment>
<comment type="domain">
    <text evidence="1">The N-terminus interacts with KaiC, while the C-terminal histidine kinase domain autophosphorylates and is probably responsible for self-oligomerization. The N-terminal domain stimulates the C-terminus to autophosphorylate.</text>
</comment>
<gene>
    <name evidence="1" type="primary">sasA</name>
    <name type="ordered locus">Syncc9902_0751</name>
</gene>
<evidence type="ECO:0000255" key="1">
    <source>
        <dbReference type="HAMAP-Rule" id="MF_01837"/>
    </source>
</evidence>
<sequence>MVDDGPKGRQQLKLLLVAARHQLSGQDLRGLVHYLEREDLGFEVTLQVADPTQQPELLELHRLVVTPALIKLQPSPKQVFAGSNILQQLKGWVPRWKQDGVVSGLGLSLRPTELDGSRTQKELQLEDQLLVLRQENETLIDRIHAQERLLRMVAHELRTPLTAAALALQSQRLGQIDMDRFQDVVTRRLEEMEALSKDLLEVGTTRWETLFNPQRLDLASVSAEVILELEKLWLGRNVEIRTDIPSDLPKVFADQRRMRQVLLNLLENALKYTGNGGHIALSMLHRTNQWVEVSVCDSGPGIPNEEQQRIFLDRVRLPQTSDRTTGFGVGLSVCRRIVEVHGGRIWVVSEPEEGACFTFTVPIWQGQGQEWGQAVLTEGQADP</sequence>
<keyword id="KW-0067">ATP-binding</keyword>
<keyword id="KW-0090">Biological rhythms</keyword>
<keyword id="KW-0418">Kinase</keyword>
<keyword id="KW-0547">Nucleotide-binding</keyword>
<keyword id="KW-0597">Phosphoprotein</keyword>
<keyword id="KW-1185">Reference proteome</keyword>
<keyword id="KW-0808">Transferase</keyword>
<keyword id="KW-0902">Two-component regulatory system</keyword>
<dbReference type="EC" id="2.7.13.3" evidence="1"/>
<dbReference type="EMBL" id="CP000097">
    <property type="protein sequence ID" value="ABB25719.1"/>
    <property type="molecule type" value="Genomic_DNA"/>
</dbReference>
<dbReference type="RefSeq" id="WP_011359559.1">
    <property type="nucleotide sequence ID" value="NC_007513.1"/>
</dbReference>
<dbReference type="SMR" id="Q3AYV8"/>
<dbReference type="STRING" id="316279.Syncc9902_0751"/>
<dbReference type="KEGG" id="sye:Syncc9902_0751"/>
<dbReference type="eggNOG" id="COG2205">
    <property type="taxonomic scope" value="Bacteria"/>
</dbReference>
<dbReference type="HOGENOM" id="CLU_723030_0_0_3"/>
<dbReference type="OrthoDB" id="9773956at2"/>
<dbReference type="Proteomes" id="UP000002712">
    <property type="component" value="Chromosome"/>
</dbReference>
<dbReference type="GO" id="GO:0005524">
    <property type="term" value="F:ATP binding"/>
    <property type="evidence" value="ECO:0007669"/>
    <property type="project" value="UniProtKB-KW"/>
</dbReference>
<dbReference type="GO" id="GO:0000155">
    <property type="term" value="F:phosphorelay sensor kinase activity"/>
    <property type="evidence" value="ECO:0007669"/>
    <property type="project" value="InterPro"/>
</dbReference>
<dbReference type="GO" id="GO:0007623">
    <property type="term" value="P:circadian rhythm"/>
    <property type="evidence" value="ECO:0007669"/>
    <property type="project" value="UniProtKB-UniRule"/>
</dbReference>
<dbReference type="CDD" id="cd00075">
    <property type="entry name" value="HATPase"/>
    <property type="match status" value="1"/>
</dbReference>
<dbReference type="CDD" id="cd00082">
    <property type="entry name" value="HisKA"/>
    <property type="match status" value="1"/>
</dbReference>
<dbReference type="CDD" id="cd02978">
    <property type="entry name" value="KaiB_like"/>
    <property type="match status" value="1"/>
</dbReference>
<dbReference type="FunFam" id="3.30.565.10:FF:000006">
    <property type="entry name" value="Sensor histidine kinase WalK"/>
    <property type="match status" value="1"/>
</dbReference>
<dbReference type="Gene3D" id="1.10.287.130">
    <property type="match status" value="1"/>
</dbReference>
<dbReference type="Gene3D" id="3.40.30.10">
    <property type="entry name" value="Glutaredoxin"/>
    <property type="match status" value="1"/>
</dbReference>
<dbReference type="Gene3D" id="3.30.565.10">
    <property type="entry name" value="Histidine kinase-like ATPase, C-terminal domain"/>
    <property type="match status" value="1"/>
</dbReference>
<dbReference type="HAMAP" id="MF_01837">
    <property type="entry name" value="Kinase_SasA"/>
    <property type="match status" value="1"/>
</dbReference>
<dbReference type="InterPro" id="IPR036890">
    <property type="entry name" value="HATPase_C_sf"/>
</dbReference>
<dbReference type="InterPro" id="IPR005467">
    <property type="entry name" value="His_kinase_dom"/>
</dbReference>
<dbReference type="InterPro" id="IPR003661">
    <property type="entry name" value="HisK_dim/P_dom"/>
</dbReference>
<dbReference type="InterPro" id="IPR036097">
    <property type="entry name" value="HisK_dim/P_sf"/>
</dbReference>
<dbReference type="InterPro" id="IPR011649">
    <property type="entry name" value="KaiB_domain"/>
</dbReference>
<dbReference type="InterPro" id="IPR023527">
    <property type="entry name" value="Kinase_SasA"/>
</dbReference>
<dbReference type="InterPro" id="IPR004358">
    <property type="entry name" value="Sig_transdc_His_kin-like_C"/>
</dbReference>
<dbReference type="InterPro" id="IPR036249">
    <property type="entry name" value="Thioredoxin-like_sf"/>
</dbReference>
<dbReference type="NCBIfam" id="NF006800">
    <property type="entry name" value="PRK09303.1"/>
    <property type="match status" value="1"/>
</dbReference>
<dbReference type="PANTHER" id="PTHR43547:SF2">
    <property type="entry name" value="HYBRID SIGNAL TRANSDUCTION HISTIDINE KINASE C"/>
    <property type="match status" value="1"/>
</dbReference>
<dbReference type="PANTHER" id="PTHR43547">
    <property type="entry name" value="TWO-COMPONENT HISTIDINE KINASE"/>
    <property type="match status" value="1"/>
</dbReference>
<dbReference type="Pfam" id="PF02518">
    <property type="entry name" value="HATPase_c"/>
    <property type="match status" value="1"/>
</dbReference>
<dbReference type="Pfam" id="PF00512">
    <property type="entry name" value="HisKA"/>
    <property type="match status" value="1"/>
</dbReference>
<dbReference type="Pfam" id="PF07689">
    <property type="entry name" value="KaiB"/>
    <property type="match status" value="1"/>
</dbReference>
<dbReference type="PRINTS" id="PR00344">
    <property type="entry name" value="BCTRLSENSOR"/>
</dbReference>
<dbReference type="SMART" id="SM00387">
    <property type="entry name" value="HATPase_c"/>
    <property type="match status" value="1"/>
</dbReference>
<dbReference type="SMART" id="SM00388">
    <property type="entry name" value="HisKA"/>
    <property type="match status" value="1"/>
</dbReference>
<dbReference type="SMART" id="SM01248">
    <property type="entry name" value="KaiB"/>
    <property type="match status" value="1"/>
</dbReference>
<dbReference type="SUPFAM" id="SSF55874">
    <property type="entry name" value="ATPase domain of HSP90 chaperone/DNA topoisomerase II/histidine kinase"/>
    <property type="match status" value="1"/>
</dbReference>
<dbReference type="SUPFAM" id="SSF47384">
    <property type="entry name" value="Homodimeric domain of signal transducing histidine kinase"/>
    <property type="match status" value="1"/>
</dbReference>
<dbReference type="SUPFAM" id="SSF52833">
    <property type="entry name" value="Thioredoxin-like"/>
    <property type="match status" value="1"/>
</dbReference>
<dbReference type="PROSITE" id="PS50109">
    <property type="entry name" value="HIS_KIN"/>
    <property type="match status" value="1"/>
</dbReference>
<name>SASA_SYNS9</name>
<feature type="chain" id="PRO_1000088449" description="Adaptive-response sensory kinase SasA">
    <location>
        <begin position="1"/>
        <end position="383"/>
    </location>
</feature>
<feature type="domain" description="Histidine kinase" evidence="1">
    <location>
        <begin position="152"/>
        <end position="365"/>
    </location>
</feature>
<feature type="modified residue" description="Phosphohistidine; by autocatalysis" evidence="1">
    <location>
        <position position="155"/>
    </location>
</feature>
<organism>
    <name type="scientific">Synechococcus sp. (strain CC9902)</name>
    <dbReference type="NCBI Taxonomy" id="316279"/>
    <lineage>
        <taxon>Bacteria</taxon>
        <taxon>Bacillati</taxon>
        <taxon>Cyanobacteriota</taxon>
        <taxon>Cyanophyceae</taxon>
        <taxon>Synechococcales</taxon>
        <taxon>Synechococcaceae</taxon>
        <taxon>Synechococcus</taxon>
    </lineage>
</organism>